<sequence>MRHYETMFILKPTLVEEEIKSKIEFYKEVITKHHGVIETSLDMGMRNLAYEIKKHKRGYYYVAYFKANPSMILELERLYRINEDVLRFIVIKYESKKEVEAWHALVDRANKKPSHAKEKHEKTEHTHSHHTEETESVGSHSK</sequence>
<keyword id="KW-0687">Ribonucleoprotein</keyword>
<keyword id="KW-0689">Ribosomal protein</keyword>
<keyword id="KW-0694">RNA-binding</keyword>
<keyword id="KW-0699">rRNA-binding</keyword>
<organism>
    <name type="scientific">Helicobacter pylori (strain Shi470)</name>
    <dbReference type="NCBI Taxonomy" id="512562"/>
    <lineage>
        <taxon>Bacteria</taxon>
        <taxon>Pseudomonadati</taxon>
        <taxon>Campylobacterota</taxon>
        <taxon>Epsilonproteobacteria</taxon>
        <taxon>Campylobacterales</taxon>
        <taxon>Helicobacteraceae</taxon>
        <taxon>Helicobacter</taxon>
    </lineage>
</organism>
<proteinExistence type="inferred from homology"/>
<reference key="1">
    <citation type="submission" date="2008-05" db="EMBL/GenBank/DDBJ databases">
        <title>Genome sequence of Helicobacter pylori from the remote Amazon: traces of Asian ancestry of the first Americans.</title>
        <authorList>
            <person name="Kersulyte D."/>
            <person name="Kalia A."/>
            <person name="Gilman R.H."/>
            <person name="Berg D.E."/>
        </authorList>
    </citation>
    <scope>NUCLEOTIDE SEQUENCE [LARGE SCALE GENOMIC DNA]</scope>
    <source>
        <strain>Shi470</strain>
    </source>
</reference>
<dbReference type="EMBL" id="CP001072">
    <property type="protein sequence ID" value="ACD48693.1"/>
    <property type="molecule type" value="Genomic_DNA"/>
</dbReference>
<dbReference type="RefSeq" id="WP_001216715.1">
    <property type="nucleotide sequence ID" value="NC_010698.2"/>
</dbReference>
<dbReference type="SMR" id="B2UV11"/>
<dbReference type="KEGG" id="hps:HPSH_06455"/>
<dbReference type="HOGENOM" id="CLU_113441_4_1_7"/>
<dbReference type="GO" id="GO:0022627">
    <property type="term" value="C:cytosolic small ribosomal subunit"/>
    <property type="evidence" value="ECO:0007669"/>
    <property type="project" value="TreeGrafter"/>
</dbReference>
<dbReference type="GO" id="GO:0070181">
    <property type="term" value="F:small ribosomal subunit rRNA binding"/>
    <property type="evidence" value="ECO:0007669"/>
    <property type="project" value="TreeGrafter"/>
</dbReference>
<dbReference type="GO" id="GO:0003735">
    <property type="term" value="F:structural constituent of ribosome"/>
    <property type="evidence" value="ECO:0007669"/>
    <property type="project" value="InterPro"/>
</dbReference>
<dbReference type="GO" id="GO:0006412">
    <property type="term" value="P:translation"/>
    <property type="evidence" value="ECO:0007669"/>
    <property type="project" value="UniProtKB-UniRule"/>
</dbReference>
<dbReference type="CDD" id="cd00473">
    <property type="entry name" value="bS6"/>
    <property type="match status" value="1"/>
</dbReference>
<dbReference type="FunFam" id="3.30.70.60:FF:000010">
    <property type="entry name" value="30S ribosomal protein S6"/>
    <property type="match status" value="1"/>
</dbReference>
<dbReference type="Gene3D" id="3.30.70.60">
    <property type="match status" value="1"/>
</dbReference>
<dbReference type="HAMAP" id="MF_00360">
    <property type="entry name" value="Ribosomal_bS6"/>
    <property type="match status" value="1"/>
</dbReference>
<dbReference type="InterPro" id="IPR000529">
    <property type="entry name" value="Ribosomal_bS6"/>
</dbReference>
<dbReference type="InterPro" id="IPR020815">
    <property type="entry name" value="Ribosomal_bS6_CS"/>
</dbReference>
<dbReference type="InterPro" id="IPR035980">
    <property type="entry name" value="Ribosomal_bS6_sf"/>
</dbReference>
<dbReference type="InterPro" id="IPR020814">
    <property type="entry name" value="Ribosomal_S6_plastid/chlpt"/>
</dbReference>
<dbReference type="InterPro" id="IPR014717">
    <property type="entry name" value="Transl_elong_EF1B/ribsomal_bS6"/>
</dbReference>
<dbReference type="NCBIfam" id="TIGR00166">
    <property type="entry name" value="S6"/>
    <property type="match status" value="1"/>
</dbReference>
<dbReference type="PANTHER" id="PTHR21011">
    <property type="entry name" value="MITOCHONDRIAL 28S RIBOSOMAL PROTEIN S6"/>
    <property type="match status" value="1"/>
</dbReference>
<dbReference type="PANTHER" id="PTHR21011:SF1">
    <property type="entry name" value="SMALL RIBOSOMAL SUBUNIT PROTEIN BS6M"/>
    <property type="match status" value="1"/>
</dbReference>
<dbReference type="Pfam" id="PF01250">
    <property type="entry name" value="Ribosomal_S6"/>
    <property type="match status" value="1"/>
</dbReference>
<dbReference type="SUPFAM" id="SSF54995">
    <property type="entry name" value="Ribosomal protein S6"/>
    <property type="match status" value="1"/>
</dbReference>
<dbReference type="PROSITE" id="PS01048">
    <property type="entry name" value="RIBOSOMAL_S6"/>
    <property type="match status" value="1"/>
</dbReference>
<accession>B2UV11</accession>
<name>RS6_HELPS</name>
<evidence type="ECO:0000255" key="1">
    <source>
        <dbReference type="HAMAP-Rule" id="MF_00360"/>
    </source>
</evidence>
<evidence type="ECO:0000256" key="2">
    <source>
        <dbReference type="SAM" id="MobiDB-lite"/>
    </source>
</evidence>
<evidence type="ECO:0000305" key="3"/>
<gene>
    <name evidence="1" type="primary">rpsF</name>
    <name type="ordered locus">HPSH_06455</name>
</gene>
<feature type="chain" id="PRO_1000120762" description="Small ribosomal subunit protein bS6">
    <location>
        <begin position="1"/>
        <end position="142"/>
    </location>
</feature>
<feature type="region of interest" description="Disordered" evidence="2">
    <location>
        <begin position="110"/>
        <end position="142"/>
    </location>
</feature>
<feature type="compositionally biased region" description="Basic and acidic residues" evidence="2">
    <location>
        <begin position="110"/>
        <end position="133"/>
    </location>
</feature>
<comment type="function">
    <text evidence="1">Binds together with bS18 to 16S ribosomal RNA.</text>
</comment>
<comment type="similarity">
    <text evidence="1">Belongs to the bacterial ribosomal protein bS6 family.</text>
</comment>
<protein>
    <recommendedName>
        <fullName evidence="1">Small ribosomal subunit protein bS6</fullName>
    </recommendedName>
    <alternativeName>
        <fullName evidence="3">30S ribosomal protein S6</fullName>
    </alternativeName>
</protein>